<evidence type="ECO:0000250" key="1"/>
<evidence type="ECO:0000250" key="2">
    <source>
        <dbReference type="UniProtKB" id="O08838"/>
    </source>
</evidence>
<evidence type="ECO:0000255" key="3"/>
<evidence type="ECO:0000255" key="4">
    <source>
        <dbReference type="PROSITE-ProRule" id="PRU00192"/>
    </source>
</evidence>
<evidence type="ECO:0000255" key="5">
    <source>
        <dbReference type="PROSITE-ProRule" id="PRU00361"/>
    </source>
</evidence>
<evidence type="ECO:0000256" key="6">
    <source>
        <dbReference type="SAM" id="MobiDB-lite"/>
    </source>
</evidence>
<evidence type="ECO:0007744" key="7">
    <source>
    </source>
</evidence>
<evidence type="ECO:0007744" key="8">
    <source>
    </source>
</evidence>
<feature type="chain" id="PRO_0000192948" description="Amphiphysin">
    <location>
        <begin position="1"/>
        <end position="686"/>
    </location>
</feature>
<feature type="domain" description="BAR" evidence="5">
    <location>
        <begin position="24"/>
        <end position="240"/>
    </location>
</feature>
<feature type="domain" description="SH3" evidence="4">
    <location>
        <begin position="613"/>
        <end position="686"/>
    </location>
</feature>
<feature type="region of interest" description="Disordered" evidence="6">
    <location>
        <begin position="244"/>
        <end position="314"/>
    </location>
</feature>
<feature type="region of interest" description="Disordered" evidence="6">
    <location>
        <begin position="421"/>
        <end position="441"/>
    </location>
</feature>
<feature type="region of interest" description="Disordered" evidence="6">
    <location>
        <begin position="483"/>
        <end position="597"/>
    </location>
</feature>
<feature type="coiled-coil region" evidence="3">
    <location>
        <begin position="10"/>
        <end position="83"/>
    </location>
</feature>
<feature type="coiled-coil region" evidence="3">
    <location>
        <begin position="144"/>
        <end position="191"/>
    </location>
</feature>
<feature type="compositionally biased region" description="Pro residues" evidence="6">
    <location>
        <begin position="261"/>
        <end position="274"/>
    </location>
</feature>
<feature type="compositionally biased region" description="Low complexity" evidence="6">
    <location>
        <begin position="424"/>
        <end position="441"/>
    </location>
</feature>
<feature type="compositionally biased region" description="Basic and acidic residues" evidence="6">
    <location>
        <begin position="541"/>
        <end position="562"/>
    </location>
</feature>
<feature type="modified residue" description="Phosphoserine" evidence="8">
    <location>
        <position position="252"/>
    </location>
</feature>
<feature type="modified residue" description="Phosphothreonine" evidence="8">
    <location>
        <position position="260"/>
    </location>
</feature>
<feature type="modified residue" description="Phosphoserine" evidence="8">
    <location>
        <position position="262"/>
    </location>
</feature>
<feature type="modified residue" description="Phosphoserine" evidence="8">
    <location>
        <position position="268"/>
    </location>
</feature>
<feature type="modified residue" description="Phosphoserine" evidence="8">
    <location>
        <position position="272"/>
    </location>
</feature>
<feature type="modified residue" description="Phosphoserine" evidence="8">
    <location>
        <position position="276"/>
    </location>
</feature>
<feature type="modified residue" description="Phosphothreonine" evidence="8">
    <location>
        <position position="280"/>
    </location>
</feature>
<feature type="modified residue" description="Phosphoserine" evidence="7 8">
    <location>
        <position position="500"/>
    </location>
</feature>
<feature type="modified residue" description="Phosphoserine" evidence="8">
    <location>
        <position position="629"/>
    </location>
</feature>
<name>AMPH_MOUSE</name>
<comment type="function">
    <text evidence="1">May participate in mechanisms of regulated exocytosis in synapses and certain endocrine cell types. May control the properties of the membrane associated cytoskeleton (By similarity).</text>
</comment>
<comment type="subunit">
    <text evidence="2">Heterodimer with BIN1 (By similarity). Binds SH3GLB1 (By similarity). Interacts with REPS1 and SGIP1 (By similarity). Binds AP2A2. Interacts with AP2B1. Interacts with DNM1 and SYNJ1 (By similarity).</text>
</comment>
<comment type="interaction">
    <interactant intactId="EBI-775139">
        <id>Q7TQF7</id>
    </interactant>
    <interactant intactId="EBI-397785">
        <id>P39053</id>
        <label>Dnm1</label>
    </interactant>
    <organismsDiffer>false</organismsDiffer>
    <experiments>3</experiments>
</comment>
<comment type="interaction">
    <interactant intactId="EBI-775139">
        <id>Q7TQF7</id>
    </interactant>
    <interactant intactId="EBI-642337">
        <id>P39054</id>
        <label>Dnm2</label>
    </interactant>
    <organismsDiffer>false</organismsDiffer>
    <experiments>5</experiments>
</comment>
<comment type="interaction">
    <interactant intactId="EBI-775139">
        <id>Q7TQF7</id>
    </interactant>
    <interactant intactId="EBI-6880033">
        <id>Q8BZ98</id>
        <label>Dnm3</label>
    </interactant>
    <organismsDiffer>false</organismsDiffer>
    <experiments>2</experiments>
</comment>
<comment type="subcellular location">
    <subcellularLocation>
        <location evidence="1">Cytoplasmic vesicle</location>
        <location evidence="1">Secretory vesicle</location>
        <location evidence="1">Synaptic vesicle membrane</location>
        <topology evidence="1">Peripheral membrane protein</topology>
        <orientation evidence="1">Cytoplasmic side</orientation>
    </subcellularLocation>
    <subcellularLocation>
        <location evidence="1">Cytoplasm</location>
        <location evidence="1">Cytoskeleton</location>
    </subcellularLocation>
</comment>
<dbReference type="EMBL" id="BC024817">
    <property type="protein sequence ID" value="AAH24817.1"/>
    <property type="molecule type" value="mRNA"/>
</dbReference>
<dbReference type="EMBL" id="BC054718">
    <property type="protein sequence ID" value="AAH54718.1"/>
    <property type="molecule type" value="mRNA"/>
</dbReference>
<dbReference type="CCDS" id="CCDS26258.1"/>
<dbReference type="RefSeq" id="NP_001276475.1">
    <property type="nucleotide sequence ID" value="NM_001289546.1"/>
</dbReference>
<dbReference type="RefSeq" id="NP_778172.1">
    <property type="nucleotide sequence ID" value="NM_175007.3"/>
</dbReference>
<dbReference type="SMR" id="Q7TQF7"/>
<dbReference type="BioGRID" id="229989">
    <property type="interactions" value="33"/>
</dbReference>
<dbReference type="FunCoup" id="Q7TQF7">
    <property type="interactions" value="1005"/>
</dbReference>
<dbReference type="IntAct" id="Q7TQF7">
    <property type="interactions" value="8"/>
</dbReference>
<dbReference type="MINT" id="Q7TQF7"/>
<dbReference type="STRING" id="10090.ENSMUSP00000142766"/>
<dbReference type="GlyGen" id="Q7TQF7">
    <property type="glycosylation" value="3 sites, 1 N-linked glycan (1 site)"/>
</dbReference>
<dbReference type="iPTMnet" id="Q7TQF7"/>
<dbReference type="PhosphoSitePlus" id="Q7TQF7"/>
<dbReference type="SwissPalm" id="Q7TQF7"/>
<dbReference type="jPOST" id="Q7TQF7"/>
<dbReference type="PaxDb" id="10090-ENSMUSP00000003345"/>
<dbReference type="PeptideAtlas" id="Q7TQF7"/>
<dbReference type="ProteomicsDB" id="296031"/>
<dbReference type="Antibodypedia" id="3258">
    <property type="antibodies" value="479 antibodies from 40 providers"/>
</dbReference>
<dbReference type="DNASU" id="218038"/>
<dbReference type="Ensembl" id="ENSMUST00000003345.10">
    <property type="protein sequence ID" value="ENSMUSP00000003345.8"/>
    <property type="gene ID" value="ENSMUSG00000021314.14"/>
</dbReference>
<dbReference type="GeneID" id="218038"/>
<dbReference type="KEGG" id="mmu:218038"/>
<dbReference type="UCSC" id="uc007pom.2">
    <property type="organism name" value="mouse"/>
</dbReference>
<dbReference type="AGR" id="MGI:103574"/>
<dbReference type="CTD" id="273"/>
<dbReference type="MGI" id="MGI:103574">
    <property type="gene designation" value="Amph"/>
</dbReference>
<dbReference type="VEuPathDB" id="HostDB:ENSMUSG00000021314"/>
<dbReference type="eggNOG" id="KOG3771">
    <property type="taxonomic scope" value="Eukaryota"/>
</dbReference>
<dbReference type="GeneTree" id="ENSGT00950000182882"/>
<dbReference type="HOGENOM" id="CLU_017859_4_0_1"/>
<dbReference type="InParanoid" id="Q7TQF7"/>
<dbReference type="OMA" id="VKMVGEX"/>
<dbReference type="OrthoDB" id="446293at2759"/>
<dbReference type="PhylomeDB" id="Q7TQF7"/>
<dbReference type="TreeFam" id="TF313542"/>
<dbReference type="Reactome" id="R-MMU-8856828">
    <property type="pathway name" value="Clathrin-mediated endocytosis"/>
</dbReference>
<dbReference type="BioGRID-ORCS" id="218038">
    <property type="hits" value="1 hit in 77 CRISPR screens"/>
</dbReference>
<dbReference type="CD-CODE" id="CE726F99">
    <property type="entry name" value="Postsynaptic density"/>
</dbReference>
<dbReference type="ChiTaRS" id="Amph">
    <property type="organism name" value="mouse"/>
</dbReference>
<dbReference type="PRO" id="PR:Q7TQF7"/>
<dbReference type="Proteomes" id="UP000000589">
    <property type="component" value="Chromosome 13"/>
</dbReference>
<dbReference type="RNAct" id="Q7TQF7">
    <property type="molecule type" value="protein"/>
</dbReference>
<dbReference type="Bgee" id="ENSMUSG00000021314">
    <property type="expression patterns" value="Expressed in saccule of membranous labyrinth and 174 other cell types or tissues"/>
</dbReference>
<dbReference type="ExpressionAtlas" id="Q7TQF7">
    <property type="expression patterns" value="baseline and differential"/>
</dbReference>
<dbReference type="GO" id="GO:0005856">
    <property type="term" value="C:cytoskeleton"/>
    <property type="evidence" value="ECO:0007669"/>
    <property type="project" value="UniProtKB-SubCell"/>
</dbReference>
<dbReference type="GO" id="GO:0098978">
    <property type="term" value="C:glutamatergic synapse"/>
    <property type="evidence" value="ECO:0000314"/>
    <property type="project" value="SynGO"/>
</dbReference>
<dbReference type="GO" id="GO:0098684">
    <property type="term" value="C:photoreceptor ribbon synapse"/>
    <property type="evidence" value="ECO:0000314"/>
    <property type="project" value="SynGO"/>
</dbReference>
<dbReference type="GO" id="GO:0098793">
    <property type="term" value="C:presynapse"/>
    <property type="evidence" value="ECO:0000314"/>
    <property type="project" value="SynGO"/>
</dbReference>
<dbReference type="GO" id="GO:0098833">
    <property type="term" value="C:presynaptic endocytic zone"/>
    <property type="evidence" value="ECO:0000314"/>
    <property type="project" value="SynGO"/>
</dbReference>
<dbReference type="GO" id="GO:0008021">
    <property type="term" value="C:synaptic vesicle"/>
    <property type="evidence" value="ECO:0000314"/>
    <property type="project" value="MGI"/>
</dbReference>
<dbReference type="GO" id="GO:0030672">
    <property type="term" value="C:synaptic vesicle membrane"/>
    <property type="evidence" value="ECO:0007669"/>
    <property type="project" value="UniProtKB-SubCell"/>
</dbReference>
<dbReference type="GO" id="GO:0007612">
    <property type="term" value="P:learning"/>
    <property type="evidence" value="ECO:0000315"/>
    <property type="project" value="MGI"/>
</dbReference>
<dbReference type="GO" id="GO:0048488">
    <property type="term" value="P:synaptic vesicle endocytosis"/>
    <property type="evidence" value="ECO:0000314"/>
    <property type="project" value="SynGO"/>
</dbReference>
<dbReference type="CDD" id="cd07611">
    <property type="entry name" value="BAR_Amphiphysin_I_II"/>
    <property type="match status" value="1"/>
</dbReference>
<dbReference type="CDD" id="cd12140">
    <property type="entry name" value="SH3_Amphiphysin_I"/>
    <property type="match status" value="1"/>
</dbReference>
<dbReference type="FunFam" id="2.30.30.40:FF:000103">
    <property type="entry name" value="Amphiphysin"/>
    <property type="match status" value="1"/>
</dbReference>
<dbReference type="FunFam" id="1.20.1270.60:FF:000013">
    <property type="entry name" value="Amphiphysin isoform 2"/>
    <property type="match status" value="1"/>
</dbReference>
<dbReference type="Gene3D" id="1.20.1270.60">
    <property type="entry name" value="Arfaptin homology (AH) domain/BAR domain"/>
    <property type="match status" value="1"/>
</dbReference>
<dbReference type="Gene3D" id="2.30.30.40">
    <property type="entry name" value="SH3 Domains"/>
    <property type="match status" value="1"/>
</dbReference>
<dbReference type="InterPro" id="IPR027267">
    <property type="entry name" value="AH/BAR_dom_sf"/>
</dbReference>
<dbReference type="InterPro" id="IPR003005">
    <property type="entry name" value="Amphiphysin"/>
</dbReference>
<dbReference type="InterPro" id="IPR003017">
    <property type="entry name" value="Amphiphysin_1"/>
</dbReference>
<dbReference type="InterPro" id="IPR035470">
    <property type="entry name" value="Amphiphysin_I_SH3"/>
</dbReference>
<dbReference type="InterPro" id="IPR004148">
    <property type="entry name" value="BAR_dom"/>
</dbReference>
<dbReference type="InterPro" id="IPR036028">
    <property type="entry name" value="SH3-like_dom_sf"/>
</dbReference>
<dbReference type="InterPro" id="IPR001452">
    <property type="entry name" value="SH3_domain"/>
</dbReference>
<dbReference type="PANTHER" id="PTHR46514">
    <property type="entry name" value="AMPHIPHYSIN"/>
    <property type="match status" value="1"/>
</dbReference>
<dbReference type="PANTHER" id="PTHR46514:SF2">
    <property type="entry name" value="AMPHIPHYSIN"/>
    <property type="match status" value="1"/>
</dbReference>
<dbReference type="Pfam" id="PF03114">
    <property type="entry name" value="BAR"/>
    <property type="match status" value="1"/>
</dbReference>
<dbReference type="PRINTS" id="PR01251">
    <property type="entry name" value="AMPHIPHYSIN"/>
</dbReference>
<dbReference type="PRINTS" id="PR01252">
    <property type="entry name" value="AMPHIPHYSIN1"/>
</dbReference>
<dbReference type="PRINTS" id="PR00452">
    <property type="entry name" value="SH3DOMAIN"/>
</dbReference>
<dbReference type="SMART" id="SM00721">
    <property type="entry name" value="BAR"/>
    <property type="match status" value="1"/>
</dbReference>
<dbReference type="SMART" id="SM00326">
    <property type="entry name" value="SH3"/>
    <property type="match status" value="1"/>
</dbReference>
<dbReference type="SUPFAM" id="SSF103657">
    <property type="entry name" value="BAR/IMD domain-like"/>
    <property type="match status" value="1"/>
</dbReference>
<dbReference type="SUPFAM" id="SSF50044">
    <property type="entry name" value="SH3-domain"/>
    <property type="match status" value="1"/>
</dbReference>
<dbReference type="PROSITE" id="PS51021">
    <property type="entry name" value="BAR"/>
    <property type="match status" value="1"/>
</dbReference>
<dbReference type="PROSITE" id="PS50002">
    <property type="entry name" value="SH3"/>
    <property type="match status" value="1"/>
</dbReference>
<protein>
    <recommendedName>
        <fullName>Amphiphysin</fullName>
    </recommendedName>
</protein>
<organism>
    <name type="scientific">Mus musculus</name>
    <name type="common">Mouse</name>
    <dbReference type="NCBI Taxonomy" id="10090"/>
    <lineage>
        <taxon>Eukaryota</taxon>
        <taxon>Metazoa</taxon>
        <taxon>Chordata</taxon>
        <taxon>Craniata</taxon>
        <taxon>Vertebrata</taxon>
        <taxon>Euteleostomi</taxon>
        <taxon>Mammalia</taxon>
        <taxon>Eutheria</taxon>
        <taxon>Euarchontoglires</taxon>
        <taxon>Glires</taxon>
        <taxon>Rodentia</taxon>
        <taxon>Myomorpha</taxon>
        <taxon>Muroidea</taxon>
        <taxon>Muridae</taxon>
        <taxon>Murinae</taxon>
        <taxon>Mus</taxon>
        <taxon>Mus</taxon>
    </lineage>
</organism>
<accession>Q7TQF7</accession>
<accession>Q8R1C4</accession>
<sequence>MADIKTGIFAKNVQKRLNRAQEKVLQKLGKADETKDEQFEEYVQNFKRQEAEGTRLQRELRGYLAAIKGMQEASMKLTESLHEVYEPDWYGREDVKMVGEKCDVLWEDFHQKLVDGSLLTLDTYLGQFPDIKNRIAKRSRKLVDYDSARHHLEALQSSKRKDESRISKAEEEFQKAQKVFEEFNVDLQEELPSLWSSRVGFYVNTFKNVSSLEAKFHKEIAVLCHKLYEVMTKLGDQHADKAFSIQGAPSDSGPLRIAKTPSPPEEPSPLPSPTASPNHTLAPASPAPVRPRSPSQTRKGPPVPPLPKVTPTKELKQENIINFFEDNFVPEINVTTPSQNEVLEVKKEETLLDLDFDPFKPDVAPAGSAAATHSPMSQTLPWDLWTTSTDLVQPASGGSFNDFTQAQDTSLFTMQTDQNMAETEQALPTEPQAEEPPATAAAPTAGLDLGLEMEEPKEEAVIPPATDTGETVETAVPTEGAPVEEAEAEKAALPAGEGGSPEGAKIDGESTELAISESPQPVEPEAGAPQVIPSVVIEPASNHEGEGEHQETATGTEPREAAEDVAAQGSAGEKQEVATEPTPLDSQATLPASAGAVDASLSAGDATQELPPGFLYKVETLHDFEAANSDELNLQRGDVVLVVPSDSEADQDAGWLVGVKESDWLQYRDLATYKGLFPENFTRRLE</sequence>
<reference key="1">
    <citation type="journal article" date="2004" name="Genome Res.">
        <title>The status, quality, and expansion of the NIH full-length cDNA project: the Mammalian Gene Collection (MGC).</title>
        <authorList>
            <consortium name="The MGC Project Team"/>
        </authorList>
    </citation>
    <scope>NUCLEOTIDE SEQUENCE [LARGE SCALE MRNA]</scope>
    <source>
        <strain>C57BL/6J</strain>
        <tissue>Brain</tissue>
        <tissue>Eye</tissue>
    </source>
</reference>
<reference key="2">
    <citation type="journal article" date="2004" name="Mol. Cell. Proteomics">
        <title>Phosphoproteomic analysis of the developing mouse brain.</title>
        <authorList>
            <person name="Ballif B.A."/>
            <person name="Villen J."/>
            <person name="Beausoleil S.A."/>
            <person name="Schwartz D."/>
            <person name="Gygi S.P."/>
        </authorList>
    </citation>
    <scope>PHOSPHORYLATION [LARGE SCALE ANALYSIS] AT SER-500</scope>
    <scope>IDENTIFICATION BY MASS SPECTROMETRY [LARGE SCALE ANALYSIS]</scope>
    <source>
        <tissue>Embryonic brain</tissue>
    </source>
</reference>
<reference key="3">
    <citation type="journal article" date="2010" name="Cell">
        <title>A tissue-specific atlas of mouse protein phosphorylation and expression.</title>
        <authorList>
            <person name="Huttlin E.L."/>
            <person name="Jedrychowski M.P."/>
            <person name="Elias J.E."/>
            <person name="Goswami T."/>
            <person name="Rad R."/>
            <person name="Beausoleil S.A."/>
            <person name="Villen J."/>
            <person name="Haas W."/>
            <person name="Sowa M.E."/>
            <person name="Gygi S.P."/>
        </authorList>
    </citation>
    <scope>PHOSPHORYLATION [LARGE SCALE ANALYSIS] AT SER-252; THR-260; SER-262; SER-268; SER-272; SER-276; THR-280; SER-500 AND SER-629</scope>
    <scope>IDENTIFICATION BY MASS SPECTROMETRY [LARGE SCALE ANALYSIS]</scope>
    <source>
        <tissue>Brain</tissue>
        <tissue>Brown adipose tissue</tissue>
        <tissue>Lung</tissue>
    </source>
</reference>
<keyword id="KW-0175">Coiled coil</keyword>
<keyword id="KW-0963">Cytoplasm</keyword>
<keyword id="KW-0968">Cytoplasmic vesicle</keyword>
<keyword id="KW-0206">Cytoskeleton</keyword>
<keyword id="KW-0472">Membrane</keyword>
<keyword id="KW-0597">Phosphoprotein</keyword>
<keyword id="KW-1185">Reference proteome</keyword>
<keyword id="KW-0728">SH3 domain</keyword>
<keyword id="KW-0770">Synapse</keyword>
<gene>
    <name type="primary">Amph</name>
    <name type="synonym">Amph1</name>
</gene>
<proteinExistence type="evidence at protein level"/>